<feature type="chain" id="PRO_0000389271" description="Small ribosomal subunit protein uS2">
    <location>
        <begin position="1"/>
        <end position="299"/>
    </location>
</feature>
<feature type="region of interest" description="Disordered" evidence="2">
    <location>
        <begin position="259"/>
        <end position="299"/>
    </location>
</feature>
<feature type="compositionally biased region" description="Low complexity" evidence="2">
    <location>
        <begin position="259"/>
        <end position="291"/>
    </location>
</feature>
<dbReference type="EMBL" id="EQ963474">
    <property type="protein sequence ID" value="EED54799.1"/>
    <property type="molecule type" value="Genomic_DNA"/>
</dbReference>
<dbReference type="RefSeq" id="XP_002376071.1">
    <property type="nucleotide sequence ID" value="XM_002376030.1"/>
</dbReference>
<dbReference type="SMR" id="B8N513"/>
<dbReference type="STRING" id="332952.B8N513"/>
<dbReference type="EnsemblFungi" id="EED54799">
    <property type="protein sequence ID" value="EED54799"/>
    <property type="gene ID" value="AFLA_020510"/>
</dbReference>
<dbReference type="VEuPathDB" id="FungiDB:AFLA_002516"/>
<dbReference type="eggNOG" id="KOG0830">
    <property type="taxonomic scope" value="Eukaryota"/>
</dbReference>
<dbReference type="HOGENOM" id="CLU_058171_0_1_1"/>
<dbReference type="OMA" id="QCHLGAK"/>
<dbReference type="GO" id="GO:0022627">
    <property type="term" value="C:cytosolic small ribosomal subunit"/>
    <property type="evidence" value="ECO:0007669"/>
    <property type="project" value="UniProtKB-UniRule"/>
</dbReference>
<dbReference type="GO" id="GO:0003735">
    <property type="term" value="F:structural constituent of ribosome"/>
    <property type="evidence" value="ECO:0007669"/>
    <property type="project" value="UniProtKB-UniRule"/>
</dbReference>
<dbReference type="GO" id="GO:0000028">
    <property type="term" value="P:ribosomal small subunit assembly"/>
    <property type="evidence" value="ECO:0007669"/>
    <property type="project" value="UniProtKB-UniRule"/>
</dbReference>
<dbReference type="GO" id="GO:0006412">
    <property type="term" value="P:translation"/>
    <property type="evidence" value="ECO:0007669"/>
    <property type="project" value="UniProtKB-UniRule"/>
</dbReference>
<dbReference type="CDD" id="cd01425">
    <property type="entry name" value="RPS2"/>
    <property type="match status" value="1"/>
</dbReference>
<dbReference type="FunFam" id="3.40.50.10490:FF:000010">
    <property type="entry name" value="40S ribosomal protein S0"/>
    <property type="match status" value="1"/>
</dbReference>
<dbReference type="Gene3D" id="3.40.50.10490">
    <property type="entry name" value="Glucose-6-phosphate isomerase like protein, domain 1"/>
    <property type="match status" value="1"/>
</dbReference>
<dbReference type="HAMAP" id="MF_03015">
    <property type="entry name" value="Ribosomal_S2_euk"/>
    <property type="match status" value="1"/>
</dbReference>
<dbReference type="InterPro" id="IPR001865">
    <property type="entry name" value="Ribosomal_uS2"/>
</dbReference>
<dbReference type="InterPro" id="IPR032281">
    <property type="entry name" value="Ribosomal_uS2_C"/>
</dbReference>
<dbReference type="InterPro" id="IPR018130">
    <property type="entry name" value="Ribosomal_uS2_CS"/>
</dbReference>
<dbReference type="InterPro" id="IPR027498">
    <property type="entry name" value="Ribosomal_uS2_euk"/>
</dbReference>
<dbReference type="InterPro" id="IPR005707">
    <property type="entry name" value="Ribosomal_uS2_euk/arc"/>
</dbReference>
<dbReference type="InterPro" id="IPR023591">
    <property type="entry name" value="Ribosomal_uS2_flav_dom_sf"/>
</dbReference>
<dbReference type="NCBIfam" id="TIGR01012">
    <property type="entry name" value="uS2_euk_arch"/>
    <property type="match status" value="1"/>
</dbReference>
<dbReference type="PANTHER" id="PTHR11489">
    <property type="entry name" value="40S RIBOSOMAL PROTEIN SA"/>
    <property type="match status" value="1"/>
</dbReference>
<dbReference type="Pfam" id="PF16122">
    <property type="entry name" value="40S_SA_C"/>
    <property type="match status" value="1"/>
</dbReference>
<dbReference type="Pfam" id="PF00318">
    <property type="entry name" value="Ribosomal_S2"/>
    <property type="match status" value="2"/>
</dbReference>
<dbReference type="PRINTS" id="PR00395">
    <property type="entry name" value="RIBOSOMALS2"/>
</dbReference>
<dbReference type="SUPFAM" id="SSF52313">
    <property type="entry name" value="Ribosomal protein S2"/>
    <property type="match status" value="1"/>
</dbReference>
<dbReference type="PROSITE" id="PS00963">
    <property type="entry name" value="RIBOSOMAL_S2_2"/>
    <property type="match status" value="1"/>
</dbReference>
<protein>
    <recommendedName>
        <fullName evidence="1">Small ribosomal subunit protein uS2</fullName>
    </recommendedName>
    <alternativeName>
        <fullName evidence="3">40S ribosomal protein S0</fullName>
    </alternativeName>
</protein>
<reference key="1">
    <citation type="journal article" date="2015" name="Genome Announc.">
        <title>Genome sequence of Aspergillus flavus NRRL 3357, a strain that causes aflatoxin contamination of food and feed.</title>
        <authorList>
            <person name="Nierman W.C."/>
            <person name="Yu J."/>
            <person name="Fedorova-Abrams N.D."/>
            <person name="Losada L."/>
            <person name="Cleveland T.E."/>
            <person name="Bhatnagar D."/>
            <person name="Bennett J.W."/>
            <person name="Dean R."/>
            <person name="Payne G.A."/>
        </authorList>
    </citation>
    <scope>NUCLEOTIDE SEQUENCE [LARGE SCALE GENOMIC DNA]</scope>
    <source>
        <strain>ATCC 200026 / FGSC A1120 / IAM 13836 / NRRL 3357 / JCM 12722 / SRRC 167</strain>
    </source>
</reference>
<proteinExistence type="inferred from homology"/>
<accession>B8N513</accession>
<keyword id="KW-0963">Cytoplasm</keyword>
<keyword id="KW-0687">Ribonucleoprotein</keyword>
<keyword id="KW-0689">Ribosomal protein</keyword>
<comment type="function">
    <text evidence="1">Required for the assembly and/or stability of the 40S ribosomal subunit. Required for the processing of the 20S rRNA-precursor to mature 18S rRNA in a late step of the maturation of 40S ribosomal subunits.</text>
</comment>
<comment type="subunit">
    <text evidence="1">Component of the small ribosomal subunit. Mature ribosomes consist of a small (40S) and a large (60S) subunit. The 40S subunit contains about 33 different proteins and 1 molecule of RNA (18S). The 60S subunit contains about 49 different proteins and 3 molecules of RNA (25S, 5.8S and 5S). Interacts with rps21.</text>
</comment>
<comment type="subcellular location">
    <subcellularLocation>
        <location evidence="1">Cytoplasm</location>
    </subcellularLocation>
</comment>
<comment type="similarity">
    <text evidence="1">Belongs to the universal ribosomal protein uS2 family.</text>
</comment>
<evidence type="ECO:0000255" key="1">
    <source>
        <dbReference type="HAMAP-Rule" id="MF_03015"/>
    </source>
</evidence>
<evidence type="ECO:0000256" key="2">
    <source>
        <dbReference type="SAM" id="MobiDB-lite"/>
    </source>
</evidence>
<evidence type="ECO:0000305" key="3"/>
<organism>
    <name type="scientific">Aspergillus flavus (strain ATCC 200026 / FGSC A1120 / IAM 13836 / NRRL 3357 / JCM 12722 / SRRC 167)</name>
    <dbReference type="NCBI Taxonomy" id="332952"/>
    <lineage>
        <taxon>Eukaryota</taxon>
        <taxon>Fungi</taxon>
        <taxon>Dikarya</taxon>
        <taxon>Ascomycota</taxon>
        <taxon>Pezizomycotina</taxon>
        <taxon>Eurotiomycetes</taxon>
        <taxon>Eurotiomycetidae</taxon>
        <taxon>Eurotiales</taxon>
        <taxon>Aspergillaceae</taxon>
        <taxon>Aspergillus</taxon>
        <taxon>Aspergillus subgen. Circumdati</taxon>
    </lineage>
</organism>
<sequence>MAPSQLPPIFNPTQQDIEQLLAAQCHLGSKNLQVHMEPYLWKTRPDGVNVINIGKTWEKILLAARIIAAVENPADICVISARPYGQRAVLKFAAHTGATAIAGRFTPGNFTNYITRSFKEPRLIIVTDPRTDSQAIKEASYVNIPVLALCDTDSPTDFVDVAIPTNNKGRHSIGLVWWMLAREVLRLRGTLATRETEWDVVPDLYFYRDPEAEENKEIADESKVATAEEVGAGAIESGFAGENWDTQGAGAGVPGTAFAAASAAGPTSWEADGADWAASSAPAAAGESWAETQPAEGKW</sequence>
<name>RSSA_ASPFN</name>
<gene>
    <name type="primary">rps0</name>
    <name type="ORF">AFLA_020510</name>
</gene>